<sequence length="257" mass="28042">MQRVDLNSDLGESFGAYTIGQDDRVLEHVTSANIACGYHAGDHNVMARTVKLAADKGMGIGAHPGFPDLLGFGRRNIQTDHKDIYNFIVYQVAALNGFCQLHRVRMQHVKPHGALYNMAAKDRVIAEAIAEAIYDIDPSLILFGLSGSELIKAGKKLGLTVANEVFADRTYQPDGTLTPRSEANALIKESERATEQVIQMVKESKVIAVDGSHIPIEADTICVHGDSPTALSFIERLHAQLQVEGVTVTKVSDFLFK</sequence>
<dbReference type="EC" id="3.5.2.9" evidence="1"/>
<dbReference type="EMBL" id="BA000004">
    <property type="protein sequence ID" value="BAB05540.1"/>
    <property type="molecule type" value="Genomic_DNA"/>
</dbReference>
<dbReference type="PIR" id="E83877">
    <property type="entry name" value="E83877"/>
</dbReference>
<dbReference type="RefSeq" id="WP_010897982.1">
    <property type="nucleotide sequence ID" value="NC_002570.2"/>
</dbReference>
<dbReference type="SMR" id="Q9KBV3"/>
<dbReference type="STRING" id="272558.gene:10727719"/>
<dbReference type="KEGG" id="bha:BH1821"/>
<dbReference type="eggNOG" id="COG1540">
    <property type="taxonomic scope" value="Bacteria"/>
</dbReference>
<dbReference type="HOGENOM" id="CLU_069535_0_0_9"/>
<dbReference type="OrthoDB" id="9773478at2"/>
<dbReference type="Proteomes" id="UP000001258">
    <property type="component" value="Chromosome"/>
</dbReference>
<dbReference type="GO" id="GO:0017168">
    <property type="term" value="F:5-oxoprolinase (ATP-hydrolyzing) activity"/>
    <property type="evidence" value="ECO:0007669"/>
    <property type="project" value="UniProtKB-UniRule"/>
</dbReference>
<dbReference type="GO" id="GO:0005524">
    <property type="term" value="F:ATP binding"/>
    <property type="evidence" value="ECO:0007669"/>
    <property type="project" value="UniProtKB-UniRule"/>
</dbReference>
<dbReference type="GO" id="GO:0005975">
    <property type="term" value="P:carbohydrate metabolic process"/>
    <property type="evidence" value="ECO:0007669"/>
    <property type="project" value="InterPro"/>
</dbReference>
<dbReference type="CDD" id="cd10787">
    <property type="entry name" value="LamB_YcsF_like"/>
    <property type="match status" value="1"/>
</dbReference>
<dbReference type="Gene3D" id="3.20.20.370">
    <property type="entry name" value="Glycoside hydrolase/deacetylase"/>
    <property type="match status" value="1"/>
</dbReference>
<dbReference type="HAMAP" id="MF_00691">
    <property type="entry name" value="PxpA"/>
    <property type="match status" value="1"/>
</dbReference>
<dbReference type="InterPro" id="IPR011330">
    <property type="entry name" value="Glyco_hydro/deAcase_b/a-brl"/>
</dbReference>
<dbReference type="InterPro" id="IPR005501">
    <property type="entry name" value="LamB/YcsF/PxpA-like"/>
</dbReference>
<dbReference type="NCBIfam" id="NF003814">
    <property type="entry name" value="PRK05406.1-3"/>
    <property type="match status" value="1"/>
</dbReference>
<dbReference type="NCBIfam" id="NF003816">
    <property type="entry name" value="PRK05406.1-5"/>
    <property type="match status" value="1"/>
</dbReference>
<dbReference type="PANTHER" id="PTHR30292:SF0">
    <property type="entry name" value="5-OXOPROLINASE SUBUNIT A"/>
    <property type="match status" value="1"/>
</dbReference>
<dbReference type="PANTHER" id="PTHR30292">
    <property type="entry name" value="UNCHARACTERIZED PROTEIN YBGL-RELATED"/>
    <property type="match status" value="1"/>
</dbReference>
<dbReference type="Pfam" id="PF03746">
    <property type="entry name" value="LamB_YcsF"/>
    <property type="match status" value="1"/>
</dbReference>
<dbReference type="SUPFAM" id="SSF88713">
    <property type="entry name" value="Glycoside hydrolase/deacetylase"/>
    <property type="match status" value="1"/>
</dbReference>
<accession>Q9KBV3</accession>
<evidence type="ECO:0000255" key="1">
    <source>
        <dbReference type="HAMAP-Rule" id="MF_00691"/>
    </source>
</evidence>
<gene>
    <name evidence="1" type="primary">pxpA</name>
    <name type="ordered locus">BH1821</name>
</gene>
<name>PXPA_HALH5</name>
<organism>
    <name type="scientific">Halalkalibacterium halodurans (strain ATCC BAA-125 / DSM 18197 / FERM 7344 / JCM 9153 / C-125)</name>
    <name type="common">Bacillus halodurans</name>
    <dbReference type="NCBI Taxonomy" id="272558"/>
    <lineage>
        <taxon>Bacteria</taxon>
        <taxon>Bacillati</taxon>
        <taxon>Bacillota</taxon>
        <taxon>Bacilli</taxon>
        <taxon>Bacillales</taxon>
        <taxon>Bacillaceae</taxon>
        <taxon>Halalkalibacterium (ex Joshi et al. 2022)</taxon>
    </lineage>
</organism>
<keyword id="KW-0067">ATP-binding</keyword>
<keyword id="KW-0378">Hydrolase</keyword>
<keyword id="KW-0547">Nucleotide-binding</keyword>
<keyword id="KW-1185">Reference proteome</keyword>
<comment type="function">
    <text evidence="1">Catalyzes the cleavage of 5-oxoproline to form L-glutamate coupled to the hydrolysis of ATP to ADP and inorganic phosphate.</text>
</comment>
<comment type="catalytic activity">
    <reaction evidence="1">
        <text>5-oxo-L-proline + ATP + 2 H2O = L-glutamate + ADP + phosphate + H(+)</text>
        <dbReference type="Rhea" id="RHEA:10348"/>
        <dbReference type="ChEBI" id="CHEBI:15377"/>
        <dbReference type="ChEBI" id="CHEBI:15378"/>
        <dbReference type="ChEBI" id="CHEBI:29985"/>
        <dbReference type="ChEBI" id="CHEBI:30616"/>
        <dbReference type="ChEBI" id="CHEBI:43474"/>
        <dbReference type="ChEBI" id="CHEBI:58402"/>
        <dbReference type="ChEBI" id="CHEBI:456216"/>
        <dbReference type="EC" id="3.5.2.9"/>
    </reaction>
</comment>
<comment type="subunit">
    <text evidence="1">Forms a complex composed of PxpA, PxpB and PxpC.</text>
</comment>
<comment type="similarity">
    <text evidence="1">Belongs to the LamB/PxpA family.</text>
</comment>
<reference key="1">
    <citation type="journal article" date="2000" name="Nucleic Acids Res.">
        <title>Complete genome sequence of the alkaliphilic bacterium Bacillus halodurans and genomic sequence comparison with Bacillus subtilis.</title>
        <authorList>
            <person name="Takami H."/>
            <person name="Nakasone K."/>
            <person name="Takaki Y."/>
            <person name="Maeno G."/>
            <person name="Sasaki R."/>
            <person name="Masui N."/>
            <person name="Fuji F."/>
            <person name="Hirama C."/>
            <person name="Nakamura Y."/>
            <person name="Ogasawara N."/>
            <person name="Kuhara S."/>
            <person name="Horikoshi K."/>
        </authorList>
    </citation>
    <scope>NUCLEOTIDE SEQUENCE [LARGE SCALE GENOMIC DNA]</scope>
    <source>
        <strain>ATCC BAA-125 / DSM 18197 / FERM 7344 / JCM 9153 / C-125</strain>
    </source>
</reference>
<feature type="chain" id="PRO_0000184986" description="5-oxoprolinase subunit A">
    <location>
        <begin position="1"/>
        <end position="257"/>
    </location>
</feature>
<protein>
    <recommendedName>
        <fullName evidence="1">5-oxoprolinase subunit A</fullName>
        <shortName evidence="1">5-OPase subunit A</shortName>
        <ecNumber evidence="1">3.5.2.9</ecNumber>
    </recommendedName>
    <alternativeName>
        <fullName evidence="1">5-oxoprolinase (ATP-hydrolyzing) subunit A</fullName>
    </alternativeName>
</protein>
<proteinExistence type="inferred from homology"/>